<proteinExistence type="inferred from homology"/>
<reference key="1">
    <citation type="submission" date="2009-01" db="EMBL/GenBank/DDBJ databases">
        <title>Complete sequence of Clostridium cellulolyticum H10.</title>
        <authorList>
            <consortium name="US DOE Joint Genome Institute"/>
            <person name="Lucas S."/>
            <person name="Copeland A."/>
            <person name="Lapidus A."/>
            <person name="Glavina del Rio T."/>
            <person name="Dalin E."/>
            <person name="Tice H."/>
            <person name="Bruce D."/>
            <person name="Goodwin L."/>
            <person name="Pitluck S."/>
            <person name="Chertkov O."/>
            <person name="Saunders E."/>
            <person name="Brettin T."/>
            <person name="Detter J.C."/>
            <person name="Han C."/>
            <person name="Larimer F."/>
            <person name="Land M."/>
            <person name="Hauser L."/>
            <person name="Kyrpides N."/>
            <person name="Ivanova N."/>
            <person name="Zhou J."/>
            <person name="Richardson P."/>
        </authorList>
    </citation>
    <scope>NUCLEOTIDE SEQUENCE [LARGE SCALE GENOMIC DNA]</scope>
    <source>
        <strain>ATCC 35319 / DSM 5812 / JCM 6584 / H10</strain>
    </source>
</reference>
<organism>
    <name type="scientific">Ruminiclostridium cellulolyticum (strain ATCC 35319 / DSM 5812 / JCM 6584 / H10)</name>
    <name type="common">Clostridium cellulolyticum</name>
    <dbReference type="NCBI Taxonomy" id="394503"/>
    <lineage>
        <taxon>Bacteria</taxon>
        <taxon>Bacillati</taxon>
        <taxon>Bacillota</taxon>
        <taxon>Clostridia</taxon>
        <taxon>Eubacteriales</taxon>
        <taxon>Oscillospiraceae</taxon>
        <taxon>Ruminiclostridium</taxon>
    </lineage>
</organism>
<sequence>MRLRRKPWARPELAACDFYVDDPPSYKGRWREFFDNSNPIHLELGCGKGGFISELAADNQNINYIAVDIKSEVLALAKRKIEKEYKERGIQEIKNIRLMSHNIELIDNMLDTVDFIEKIYINFCNPWPKTPYKKKRLTHGKQLIKYKQFLASGAEIWFKTDDDGLFEDSVKYFEENGFIIKYKTWNLHESGFGENVPTEHEIMFSEEGIPIKFLIAEYKQKIHQAVCIGINIKEEN</sequence>
<evidence type="ECO:0000255" key="1">
    <source>
        <dbReference type="HAMAP-Rule" id="MF_01057"/>
    </source>
</evidence>
<gene>
    <name evidence="1" type="primary">trmB</name>
    <name type="ordered locus">Ccel_1148</name>
</gene>
<keyword id="KW-0489">Methyltransferase</keyword>
<keyword id="KW-1185">Reference proteome</keyword>
<keyword id="KW-0949">S-adenosyl-L-methionine</keyword>
<keyword id="KW-0808">Transferase</keyword>
<keyword id="KW-0819">tRNA processing</keyword>
<name>TRMB_RUMCH</name>
<feature type="chain" id="PRO_1000149652" description="tRNA (guanine-N(7)-)-methyltransferase">
    <location>
        <begin position="1"/>
        <end position="236"/>
    </location>
</feature>
<feature type="binding site" evidence="1">
    <location>
        <position position="43"/>
    </location>
    <ligand>
        <name>S-adenosyl-L-methionine</name>
        <dbReference type="ChEBI" id="CHEBI:59789"/>
    </ligand>
</feature>
<feature type="binding site" evidence="1">
    <location>
        <position position="68"/>
    </location>
    <ligand>
        <name>S-adenosyl-L-methionine</name>
        <dbReference type="ChEBI" id="CHEBI:59789"/>
    </ligand>
</feature>
<feature type="binding site" evidence="1">
    <location>
        <position position="102"/>
    </location>
    <ligand>
        <name>S-adenosyl-L-methionine</name>
        <dbReference type="ChEBI" id="CHEBI:59789"/>
    </ligand>
</feature>
<feature type="binding site" evidence="1">
    <location>
        <position position="125"/>
    </location>
    <ligand>
        <name>S-adenosyl-L-methionine</name>
        <dbReference type="ChEBI" id="CHEBI:59789"/>
    </ligand>
</feature>
<feature type="binding site" evidence="1">
    <location>
        <position position="129"/>
    </location>
    <ligand>
        <name>substrate</name>
    </ligand>
</feature>
<feature type="binding site" evidence="1">
    <location>
        <position position="161"/>
    </location>
    <ligand>
        <name>substrate</name>
    </ligand>
</feature>
<comment type="function">
    <text evidence="1">Catalyzes the formation of N(7)-methylguanine at position 46 (m7G46) in tRNA.</text>
</comment>
<comment type="catalytic activity">
    <reaction evidence="1">
        <text>guanosine(46) in tRNA + S-adenosyl-L-methionine = N(7)-methylguanosine(46) in tRNA + S-adenosyl-L-homocysteine</text>
        <dbReference type="Rhea" id="RHEA:42708"/>
        <dbReference type="Rhea" id="RHEA-COMP:10188"/>
        <dbReference type="Rhea" id="RHEA-COMP:10189"/>
        <dbReference type="ChEBI" id="CHEBI:57856"/>
        <dbReference type="ChEBI" id="CHEBI:59789"/>
        <dbReference type="ChEBI" id="CHEBI:74269"/>
        <dbReference type="ChEBI" id="CHEBI:74480"/>
        <dbReference type="EC" id="2.1.1.33"/>
    </reaction>
</comment>
<comment type="pathway">
    <text evidence="1">tRNA modification; N(7)-methylguanine-tRNA biosynthesis.</text>
</comment>
<comment type="similarity">
    <text evidence="1">Belongs to the class I-like SAM-binding methyltransferase superfamily. TrmB family.</text>
</comment>
<dbReference type="EC" id="2.1.1.33" evidence="1"/>
<dbReference type="EMBL" id="CP001348">
    <property type="protein sequence ID" value="ACL75505.1"/>
    <property type="molecule type" value="Genomic_DNA"/>
</dbReference>
<dbReference type="RefSeq" id="WP_015924660.1">
    <property type="nucleotide sequence ID" value="NC_011898.1"/>
</dbReference>
<dbReference type="SMR" id="B8I005"/>
<dbReference type="STRING" id="394503.Ccel_1148"/>
<dbReference type="KEGG" id="cce:Ccel_1148"/>
<dbReference type="eggNOG" id="COG0220">
    <property type="taxonomic scope" value="Bacteria"/>
</dbReference>
<dbReference type="HOGENOM" id="CLU_050910_2_1_9"/>
<dbReference type="OrthoDB" id="9802090at2"/>
<dbReference type="UniPathway" id="UPA00989"/>
<dbReference type="Proteomes" id="UP000001349">
    <property type="component" value="Chromosome"/>
</dbReference>
<dbReference type="GO" id="GO:0043527">
    <property type="term" value="C:tRNA methyltransferase complex"/>
    <property type="evidence" value="ECO:0007669"/>
    <property type="project" value="TreeGrafter"/>
</dbReference>
<dbReference type="GO" id="GO:0008176">
    <property type="term" value="F:tRNA (guanine(46)-N7)-methyltransferase activity"/>
    <property type="evidence" value="ECO:0007669"/>
    <property type="project" value="UniProtKB-UniRule"/>
</dbReference>
<dbReference type="CDD" id="cd02440">
    <property type="entry name" value="AdoMet_MTases"/>
    <property type="match status" value="1"/>
</dbReference>
<dbReference type="Gene3D" id="3.40.50.150">
    <property type="entry name" value="Vaccinia Virus protein VP39"/>
    <property type="match status" value="1"/>
</dbReference>
<dbReference type="HAMAP" id="MF_01057">
    <property type="entry name" value="tRNA_methyltr_TrmB"/>
    <property type="match status" value="1"/>
</dbReference>
<dbReference type="InterPro" id="IPR029063">
    <property type="entry name" value="SAM-dependent_MTases_sf"/>
</dbReference>
<dbReference type="InterPro" id="IPR003358">
    <property type="entry name" value="tRNA_(Gua-N-7)_MeTrfase_Trmb"/>
</dbReference>
<dbReference type="InterPro" id="IPR055361">
    <property type="entry name" value="tRNA_methyltr_TrmB_bact"/>
</dbReference>
<dbReference type="NCBIfam" id="NF001080">
    <property type="entry name" value="PRK00121.2-2"/>
    <property type="match status" value="1"/>
</dbReference>
<dbReference type="NCBIfam" id="TIGR00091">
    <property type="entry name" value="tRNA (guanosine(46)-N7)-methyltransferase TrmB"/>
    <property type="match status" value="1"/>
</dbReference>
<dbReference type="PANTHER" id="PTHR23417">
    <property type="entry name" value="3-DEOXY-D-MANNO-OCTULOSONIC-ACID TRANSFERASE/TRNA GUANINE-N 7 - -METHYLTRANSFERASE"/>
    <property type="match status" value="1"/>
</dbReference>
<dbReference type="PANTHER" id="PTHR23417:SF14">
    <property type="entry name" value="PENTACOTRIPEPTIDE-REPEAT REGION OF PRORP DOMAIN-CONTAINING PROTEIN"/>
    <property type="match status" value="1"/>
</dbReference>
<dbReference type="Pfam" id="PF02390">
    <property type="entry name" value="Methyltransf_4"/>
    <property type="match status" value="1"/>
</dbReference>
<dbReference type="SUPFAM" id="SSF53335">
    <property type="entry name" value="S-adenosyl-L-methionine-dependent methyltransferases"/>
    <property type="match status" value="1"/>
</dbReference>
<dbReference type="PROSITE" id="PS51625">
    <property type="entry name" value="SAM_MT_TRMB"/>
    <property type="match status" value="1"/>
</dbReference>
<accession>B8I005</accession>
<protein>
    <recommendedName>
        <fullName evidence="1">tRNA (guanine-N(7)-)-methyltransferase</fullName>
        <ecNumber evidence="1">2.1.1.33</ecNumber>
    </recommendedName>
    <alternativeName>
        <fullName evidence="1">tRNA (guanine(46)-N(7))-methyltransferase</fullName>
    </alternativeName>
    <alternativeName>
        <fullName evidence="1">tRNA(m7G46)-methyltransferase</fullName>
    </alternativeName>
</protein>